<accession>P60712</accession>
<accession>A5D961</accession>
<accession>A5PKA1</accession>
<accession>P02570</accession>
<accession>P70514</accession>
<accession>P99021</accession>
<accession>Q11211</accession>
<accession>Q3SZD2</accession>
<accession>Q64316</accession>
<accession>Q8MIJ0</accession>
<gene>
    <name type="primary">ACTB</name>
</gene>
<sequence length="375" mass="41737">MDDDIAALVVDNGSGMCKAGFAGDDAPRAVFPSIVGRPRHQGVMVGMGQKDSYVGDEAQSKRGILTLKYPIEHGIVTNWDDMEKIWHHTFYNELRVAPEEHPVLLTEAPLNPKANREKMTQIMFETFNTPAMYVAIQAVLSLYASGRTTGIVMDSGDGVTHTVPIYEGYALPHAILRLDLAGRDLTDYLMKILTERGYSFTTTAEREIVRDIKEKLCYVALDFEQEMATAASSSSLEKSYELPDGQVITIGNERFRCPEALFQPSFLGMESCGIHETTFNSIMKCDVDIRKDLYANTVLSGGTTMYPGIADRMQKEITALAPSTMKIKIIAPPERKYSVWIGGSILASLSTFQQMWISKQEYDESGPSIVHRKCF</sequence>
<comment type="function">
    <text evidence="2 5">Actin is a highly conserved protein that polymerizes to produce filaments that form cross-linked networks in the cytoplasm of cells (By similarity). Actin exists in both monomeric (G-actin) and polymeric (F-actin) forms, both forms playing key functions, such as cell motility and contraction (By similarity). In addition to their role in the cytoplasmic cytoskeleton, G- and F-actin also localize in the nucleus, and regulate gene transcription and motility and repair of damaged DNA (By similarity). Plays a role in the assembly of the gamma-tubulin ring complex (gTuRC), which regulates the minus-end nucleation of alpha-beta tubulin heterodimers that grow into microtubule protafilaments (By similarity). Part of the ACTR1A/ACTB filament around which the dynactin complex is built (By similarity). The dynactin multiprotein complex activates the molecular motor dynein for ultra-processive transport along microtubules (By similarity).</text>
</comment>
<comment type="catalytic activity">
    <reaction evidence="4">
        <text>ATP + H2O = ADP + phosphate + H(+)</text>
        <dbReference type="Rhea" id="RHEA:13065"/>
        <dbReference type="ChEBI" id="CHEBI:15377"/>
        <dbReference type="ChEBI" id="CHEBI:15378"/>
        <dbReference type="ChEBI" id="CHEBI:30616"/>
        <dbReference type="ChEBI" id="CHEBI:43474"/>
        <dbReference type="ChEBI" id="CHEBI:456216"/>
    </reaction>
</comment>
<comment type="subunit">
    <text evidence="1 2 3 5">Polymerization of globular actin (G-actin) leads to a structural filament (F-actin) in the form of a two-stranded helix (By similarity). Each actin can bind to 4 others (By similarity). Identified in a IGF2BP1-dependent mRNP granule complex containing untranslated mRNAs (By similarity). Component of the BAF complex, which includes at least actin (ACTB), ARID1A, ARID1B/BAF250, SMARCA2, SMARCA4/BRG1, ACTL6A/BAF53, ACTL6B/BAF53B, SMARCE1/BAF57 SMARCC1/BAF155, SMARCC2/BAF170, SMARCB1/SNF5/INI1, and one or more of SMARCD1/BAF60A, SMARCD2/BAF60B, or SMARCD3/BAF60C (By similarity). In muscle cells, the BAF complex also contains DPF3 (By similarity). Found in a complex with XPO6, Ran, ACTB and PFN1 (By similarity). Interacts with PFN1 (By similarity). Interacts with XPO6 and EMD (By similarity). Interacts with ERBB2 (By similarity). Interacts with GCSAM (By similarity). Interacts with TBC1D21 (By similarity). Interacts with CPNE1 (via VWFA domain) and CPNE4 (via VWFA domain) (By similarity). Interacts with DHX9 (via C-terminus); this interaction is direct and mediates the attachment to nuclear ribonucleoprotein complexes (By similarity). Interacts with FAM107A (By similarity). Associates with the gamma-tubulin ring complex (gTuRC) consisting of TUBGCP2, TUBGCP3, TUBGCP4, TUBGCP5 and TUBGCP6 and gamma-tubulin TUBG1 or TUBG2; within the complex, interacts with TUBGCP3 and TUBGCP6 to form a luminal bridge with MZT1 that stabilizes the initial structure during complex assembly (By similarity). Part of the ACTR1A/ACTB filament around which the dynactin complex is built (By similarity). The filament contains 8 copies of ACTR1A and 1 ACTB (By similarity). Interacts with TPRN which forms ring-like structures in the stereocilium taper region; the interaction may stabilize stereocilia in inner ear hair cells (By similarity). Interacts with AMOTL2 (via N-terminus), the interaction facilitates binding of cell junction complexes to actin fibers in endothelial cells (By similarity).</text>
</comment>
<comment type="subcellular location">
    <subcellularLocation>
        <location evidence="2">Cytoplasm</location>
        <location evidence="2">Cytoskeleton</location>
    </subcellularLocation>
    <subcellularLocation>
        <location evidence="2">Nucleus</location>
    </subcellularLocation>
    <text evidence="2">Localized in cytoplasmic mRNP granules containing untranslated mRNAs.</text>
</comment>
<comment type="PTM">
    <molecule>Actin, cytoplasmic 1</molecule>
    <text evidence="2">N-terminal cleavage of acetylated methionine of immature cytoplasmic actin by ACTMAP.</text>
</comment>
<comment type="PTM">
    <text evidence="2">ISGylated.</text>
</comment>
<comment type="PTM">
    <text evidence="3">Oxidation of Met-44 and Met-47 by MICALs (MICAL1, MICAL2 or MICAL3) to form methionine sulfoxide promotes actin filament depolymerization. MICAL1 and MICAL2 produce the (R)-S-oxide form. The (R)-S-oxide form is reverted by MSRB1 and MSRB2, which promote actin repolymerization.</text>
</comment>
<comment type="PTM">
    <text evidence="2">Monomethylation at Lys-84 (K84me1) regulates actin-myosin interaction and actomyosin-dependent processes. Demethylation by ALKBH4 is required for maintaining actomyosin dynamics supporting normal cleavage furrow ingression during cytokinesis and cell migration.</text>
</comment>
<comment type="PTM">
    <molecule>Actin, cytoplasmic 1, N-terminally processed</molecule>
    <text evidence="2">N-terminal acetylation by NAA80 affects actin filament depolymerization and elongation, including elongation driven by formins. In contrast, filament nucleation by the Arp2/3 complex is not affected.</text>
</comment>
<comment type="PTM">
    <text evidence="2 3">Methylated at His-73 by SETD3 (By similarity). Methylation at His-73 is required for smooth muscle contraction of the laboring uterus during delivery (By similarity).</text>
</comment>
<comment type="miscellaneous">
    <text evidence="2">In vertebrates 3 main groups of actin isoforms, alpha, beta and gamma have been identified. The alpha actins are found in muscle tissues and are a major constituent of the contractile apparatus. The beta and gamma actins coexist in most cell types as components of the cytoskeleton and as mediators of internal cell motility.</text>
</comment>
<comment type="similarity">
    <text evidence="6">Belongs to the actin family.</text>
</comment>
<dbReference type="EC" id="3.6.4.-" evidence="4"/>
<dbReference type="EMBL" id="AY141970">
    <property type="protein sequence ID" value="AAM98378.1"/>
    <property type="molecule type" value="mRNA"/>
</dbReference>
<dbReference type="EMBL" id="BT030480">
    <property type="protein sequence ID" value="ABQ12920.1"/>
    <property type="molecule type" value="mRNA"/>
</dbReference>
<dbReference type="EMBL" id="BC102948">
    <property type="protein sequence ID" value="AAI02949.1"/>
    <property type="molecule type" value="mRNA"/>
</dbReference>
<dbReference type="EMBL" id="BC142413">
    <property type="protein sequence ID" value="AAI42414.1"/>
    <property type="molecule type" value="mRNA"/>
</dbReference>
<dbReference type="EMBL" id="K00622">
    <property type="protein sequence ID" value="AAA30352.1"/>
    <property type="molecule type" value="mRNA"/>
</dbReference>
<dbReference type="EMBL" id="K00623">
    <property type="protein sequence ID" value="AAA30353.1"/>
    <property type="molecule type" value="mRNA"/>
</dbReference>
<dbReference type="PIR" id="E14185">
    <property type="entry name" value="ATBOB"/>
</dbReference>
<dbReference type="RefSeq" id="NP_776404.2">
    <property type="nucleotide sequence ID" value="NM_173979.3"/>
</dbReference>
<dbReference type="PDB" id="1HLU">
    <property type="method" value="X-ray"/>
    <property type="resolution" value="2.65 A"/>
    <property type="chains" value="A=2-375"/>
</dbReference>
<dbReference type="PDB" id="2BTF">
    <property type="method" value="X-ray"/>
    <property type="resolution" value="2.55 A"/>
    <property type="chains" value="A=2-375"/>
</dbReference>
<dbReference type="PDB" id="2OAN">
    <property type="method" value="X-ray"/>
    <property type="resolution" value="2.61 A"/>
    <property type="chains" value="A/B/C/D=1-375"/>
</dbReference>
<dbReference type="PDB" id="3U4L">
    <property type="method" value="X-ray"/>
    <property type="resolution" value="2.40 A"/>
    <property type="chains" value="A=1-375"/>
</dbReference>
<dbReference type="PDB" id="3UB5">
    <property type="method" value="X-ray"/>
    <property type="resolution" value="2.20 A"/>
    <property type="chains" value="A=2-375"/>
</dbReference>
<dbReference type="PDB" id="7PDZ">
    <property type="method" value="EM"/>
    <property type="resolution" value="3.80 A"/>
    <property type="chains" value="I/J/K/L/N/O=1-375"/>
</dbReference>
<dbReference type="PDB" id="8OI6">
    <property type="method" value="EM"/>
    <property type="resolution" value="3.59 A"/>
    <property type="chains" value="A/B/C/D=1-375"/>
</dbReference>
<dbReference type="PDB" id="9FJU">
    <property type="method" value="EM"/>
    <property type="resolution" value="3.84 A"/>
    <property type="chains" value="A/B/C/D=2-375"/>
</dbReference>
<dbReference type="PDB" id="9FJY">
    <property type="method" value="EM"/>
    <property type="resolution" value="3.79 A"/>
    <property type="chains" value="A/B/C/D=2-375"/>
</dbReference>
<dbReference type="PDBsum" id="1HLU"/>
<dbReference type="PDBsum" id="2BTF"/>
<dbReference type="PDBsum" id="2OAN"/>
<dbReference type="PDBsum" id="3U4L"/>
<dbReference type="PDBsum" id="3UB5"/>
<dbReference type="PDBsum" id="7PDZ"/>
<dbReference type="PDBsum" id="8OI6"/>
<dbReference type="PDBsum" id="9FJU"/>
<dbReference type="PDBsum" id="9FJY"/>
<dbReference type="EMDB" id="EMD-13343"/>
<dbReference type="EMDB" id="EMD-16887"/>
<dbReference type="EMDB" id="EMD-50516"/>
<dbReference type="EMDB" id="EMD-50517"/>
<dbReference type="SMR" id="P60712"/>
<dbReference type="CORUM" id="P60712"/>
<dbReference type="DIP" id="DIP-57682N"/>
<dbReference type="FunCoup" id="P60712">
    <property type="interactions" value="3064"/>
</dbReference>
<dbReference type="IntAct" id="P60712">
    <property type="interactions" value="5"/>
</dbReference>
<dbReference type="MINT" id="P60712"/>
<dbReference type="STRING" id="9913.ENSBTAP00000036739"/>
<dbReference type="PeptideAtlas" id="P60712"/>
<dbReference type="Ensembl" id="ENSBTAT00000036888.6">
    <property type="protein sequence ID" value="ENSBTAP00000036739.5"/>
    <property type="gene ID" value="ENSBTAG00000026199.6"/>
</dbReference>
<dbReference type="GeneID" id="280979"/>
<dbReference type="KEGG" id="bta:280979"/>
<dbReference type="CTD" id="60"/>
<dbReference type="VEuPathDB" id="HostDB:ENSBTAG00000026199"/>
<dbReference type="VGNC" id="VGNC:106628">
    <property type="gene designation" value="ACTB"/>
</dbReference>
<dbReference type="GeneTree" id="ENSGT00950000182960"/>
<dbReference type="InParanoid" id="P60712"/>
<dbReference type="OMA" id="FHTTAER"/>
<dbReference type="OrthoDB" id="9816604at2759"/>
<dbReference type="Reactome" id="R-BTA-190873">
    <property type="pathway name" value="Gap junction degradation"/>
</dbReference>
<dbReference type="Reactome" id="R-BTA-196025">
    <property type="pathway name" value="Formation of annular gap junctions"/>
</dbReference>
<dbReference type="Reactome" id="R-BTA-2029482">
    <property type="pathway name" value="Regulation of actin dynamics for phagocytic cup formation"/>
</dbReference>
<dbReference type="Reactome" id="R-BTA-3928662">
    <property type="pathway name" value="EPHB-mediated forward signaling"/>
</dbReference>
<dbReference type="Reactome" id="R-BTA-418990">
    <property type="pathway name" value="Adherens junctions interactions"/>
</dbReference>
<dbReference type="Reactome" id="R-BTA-4420097">
    <property type="pathway name" value="VEGFA-VEGFR2 Pathway"/>
</dbReference>
<dbReference type="Reactome" id="R-BTA-446353">
    <property type="pathway name" value="Cell-extracellular matrix interactions"/>
</dbReference>
<dbReference type="Reactome" id="R-BTA-5250924">
    <property type="pathway name" value="B-WICH complex positively regulates rRNA expression"/>
</dbReference>
<dbReference type="Reactome" id="R-BTA-5626467">
    <property type="pathway name" value="RHO GTPases activate IQGAPs"/>
</dbReference>
<dbReference type="Reactome" id="R-BTA-5663213">
    <property type="pathway name" value="RHO GTPases Activate WASPs and WAVEs"/>
</dbReference>
<dbReference type="Reactome" id="R-BTA-5663220">
    <property type="pathway name" value="RHO GTPases Activate Formins"/>
</dbReference>
<dbReference type="Reactome" id="R-BTA-5674135">
    <property type="pathway name" value="MAP2K and MAPK activation"/>
</dbReference>
<dbReference type="Reactome" id="R-BTA-5689603">
    <property type="pathway name" value="UCH proteinases"/>
</dbReference>
<dbReference type="Reactome" id="R-BTA-5696394">
    <property type="pathway name" value="DNA Damage Recognition in GG-NER"/>
</dbReference>
<dbReference type="Reactome" id="R-BTA-8856828">
    <property type="pathway name" value="Clathrin-mediated endocytosis"/>
</dbReference>
<dbReference type="Reactome" id="R-BTA-9035034">
    <property type="pathway name" value="RHOF GTPase cycle"/>
</dbReference>
<dbReference type="Reactome" id="R-BTA-9913351">
    <property type="pathway name" value="Formation of the dystrophin-glycoprotein complex (DGC)"/>
</dbReference>
<dbReference type="CD-CODE" id="D7FE2080">
    <property type="entry name" value="Nucleolus"/>
</dbReference>
<dbReference type="EvolutionaryTrace" id="P60712"/>
<dbReference type="Proteomes" id="UP000009136">
    <property type="component" value="Chromosome 25"/>
</dbReference>
<dbReference type="Bgee" id="ENSBTAG00000026199">
    <property type="expression patterns" value="Expressed in monocyte and 105 other cell types or tissues"/>
</dbReference>
<dbReference type="GO" id="GO:0015629">
    <property type="term" value="C:actin cytoskeleton"/>
    <property type="evidence" value="ECO:0000250"/>
    <property type="project" value="UniProtKB"/>
</dbReference>
<dbReference type="GO" id="GO:0005884">
    <property type="term" value="C:actin filament"/>
    <property type="evidence" value="ECO:0000318"/>
    <property type="project" value="GO_Central"/>
</dbReference>
<dbReference type="GO" id="GO:0005912">
    <property type="term" value="C:adherens junction"/>
    <property type="evidence" value="ECO:0007669"/>
    <property type="project" value="Ensembl"/>
</dbReference>
<dbReference type="GO" id="GO:0043296">
    <property type="term" value="C:apical junction complex"/>
    <property type="evidence" value="ECO:0007669"/>
    <property type="project" value="Ensembl"/>
</dbReference>
<dbReference type="GO" id="GO:0030424">
    <property type="term" value="C:axon"/>
    <property type="evidence" value="ECO:0000318"/>
    <property type="project" value="GO_Central"/>
</dbReference>
<dbReference type="GO" id="GO:0005903">
    <property type="term" value="C:brush border"/>
    <property type="evidence" value="ECO:0007669"/>
    <property type="project" value="Ensembl"/>
</dbReference>
<dbReference type="GO" id="GO:0044305">
    <property type="term" value="C:calyx of Held"/>
    <property type="evidence" value="ECO:0007669"/>
    <property type="project" value="Ensembl"/>
</dbReference>
<dbReference type="GO" id="GO:0030863">
    <property type="term" value="C:cortical cytoskeleton"/>
    <property type="evidence" value="ECO:0007669"/>
    <property type="project" value="Ensembl"/>
</dbReference>
<dbReference type="GO" id="GO:0005737">
    <property type="term" value="C:cytoplasm"/>
    <property type="evidence" value="ECO:0000318"/>
    <property type="project" value="GO_Central"/>
</dbReference>
<dbReference type="GO" id="GO:0036464">
    <property type="term" value="C:cytoplasmic ribonucleoprotein granule"/>
    <property type="evidence" value="ECO:0007669"/>
    <property type="project" value="Ensembl"/>
</dbReference>
<dbReference type="GO" id="GO:0005856">
    <property type="term" value="C:cytoskeleton"/>
    <property type="evidence" value="ECO:0000250"/>
    <property type="project" value="AgBase"/>
</dbReference>
<dbReference type="GO" id="GO:0005829">
    <property type="term" value="C:cytosol"/>
    <property type="evidence" value="ECO:0000304"/>
    <property type="project" value="Reactome"/>
</dbReference>
<dbReference type="GO" id="GO:0097433">
    <property type="term" value="C:dense body"/>
    <property type="evidence" value="ECO:0000250"/>
    <property type="project" value="AgBase"/>
</dbReference>
<dbReference type="GO" id="GO:0005925">
    <property type="term" value="C:focal adhesion"/>
    <property type="evidence" value="ECO:0000250"/>
    <property type="project" value="AgBase"/>
</dbReference>
<dbReference type="GO" id="GO:0098978">
    <property type="term" value="C:glutamatergic synapse"/>
    <property type="evidence" value="ECO:0007669"/>
    <property type="project" value="Ensembl"/>
</dbReference>
<dbReference type="GO" id="GO:0030027">
    <property type="term" value="C:lamellipodium"/>
    <property type="evidence" value="ECO:0007669"/>
    <property type="project" value="Ensembl"/>
</dbReference>
<dbReference type="GO" id="GO:0016020">
    <property type="term" value="C:membrane"/>
    <property type="evidence" value="ECO:0000318"/>
    <property type="project" value="GO_Central"/>
</dbReference>
<dbReference type="GO" id="GO:0035267">
    <property type="term" value="C:NuA4 histone acetyltransferase complex"/>
    <property type="evidence" value="ECO:0000250"/>
    <property type="project" value="AgBase"/>
</dbReference>
<dbReference type="GO" id="GO:0000786">
    <property type="term" value="C:nucleosome"/>
    <property type="evidence" value="ECO:0007669"/>
    <property type="project" value="Ensembl"/>
</dbReference>
<dbReference type="GO" id="GO:0005634">
    <property type="term" value="C:nucleus"/>
    <property type="evidence" value="ECO:0000250"/>
    <property type="project" value="UniProtKB"/>
</dbReference>
<dbReference type="GO" id="GO:0005886">
    <property type="term" value="C:plasma membrane"/>
    <property type="evidence" value="ECO:0000250"/>
    <property type="project" value="AgBase"/>
</dbReference>
<dbReference type="GO" id="GO:0098871">
    <property type="term" value="C:postsynaptic actin cytoskeleton"/>
    <property type="evidence" value="ECO:0007669"/>
    <property type="project" value="Ensembl"/>
</dbReference>
<dbReference type="GO" id="GO:0032991">
    <property type="term" value="C:protein-containing complex"/>
    <property type="evidence" value="ECO:0000250"/>
    <property type="project" value="UniProtKB"/>
</dbReference>
<dbReference type="GO" id="GO:1990904">
    <property type="term" value="C:ribonucleoprotein complex"/>
    <property type="evidence" value="ECO:0007669"/>
    <property type="project" value="Ensembl"/>
</dbReference>
<dbReference type="GO" id="GO:0098685">
    <property type="term" value="C:Schaffer collateral - CA1 synapse"/>
    <property type="evidence" value="ECO:0007669"/>
    <property type="project" value="Ensembl"/>
</dbReference>
<dbReference type="GO" id="GO:0045202">
    <property type="term" value="C:synapse"/>
    <property type="evidence" value="ECO:0000318"/>
    <property type="project" value="GO_Central"/>
</dbReference>
<dbReference type="GO" id="GO:0070160">
    <property type="term" value="C:tight junction"/>
    <property type="evidence" value="ECO:0007669"/>
    <property type="project" value="Ensembl"/>
</dbReference>
<dbReference type="GO" id="GO:0005524">
    <property type="term" value="F:ATP binding"/>
    <property type="evidence" value="ECO:0007669"/>
    <property type="project" value="UniProtKB-KW"/>
</dbReference>
<dbReference type="GO" id="GO:0016887">
    <property type="term" value="F:ATP hydrolysis activity"/>
    <property type="evidence" value="ECO:0007669"/>
    <property type="project" value="Ensembl"/>
</dbReference>
<dbReference type="GO" id="GO:0042802">
    <property type="term" value="F:identical protein binding"/>
    <property type="evidence" value="ECO:0007669"/>
    <property type="project" value="Ensembl"/>
</dbReference>
<dbReference type="GO" id="GO:0019894">
    <property type="term" value="F:kinesin binding"/>
    <property type="evidence" value="ECO:0007669"/>
    <property type="project" value="Ensembl"/>
</dbReference>
<dbReference type="GO" id="GO:0050998">
    <property type="term" value="F:nitric-oxide synthase binding"/>
    <property type="evidence" value="ECO:0007669"/>
    <property type="project" value="Ensembl"/>
</dbReference>
<dbReference type="GO" id="GO:0030235">
    <property type="term" value="F:nitric-oxide synthase regulator activity"/>
    <property type="evidence" value="ECO:0007669"/>
    <property type="project" value="Ensembl"/>
</dbReference>
<dbReference type="GO" id="GO:0019901">
    <property type="term" value="F:protein kinase binding"/>
    <property type="evidence" value="ECO:0000318"/>
    <property type="project" value="GO_Central"/>
</dbReference>
<dbReference type="GO" id="GO:0098973">
    <property type="term" value="F:structural constituent of postsynaptic actin cytoskeleton"/>
    <property type="evidence" value="ECO:0000318"/>
    <property type="project" value="GO_Central"/>
</dbReference>
<dbReference type="GO" id="GO:0030957">
    <property type="term" value="F:Tat protein binding"/>
    <property type="evidence" value="ECO:0007669"/>
    <property type="project" value="Ensembl"/>
</dbReference>
<dbReference type="GO" id="GO:0141108">
    <property type="term" value="F:transporter regulator activity"/>
    <property type="evidence" value="ECO:0007669"/>
    <property type="project" value="Ensembl"/>
</dbReference>
<dbReference type="GO" id="GO:0034333">
    <property type="term" value="P:adherens junction assembly"/>
    <property type="evidence" value="ECO:0007669"/>
    <property type="project" value="Ensembl"/>
</dbReference>
<dbReference type="GO" id="GO:0045176">
    <property type="term" value="P:apical protein localization"/>
    <property type="evidence" value="ECO:0007669"/>
    <property type="project" value="Ensembl"/>
</dbReference>
<dbReference type="GO" id="GO:0007409">
    <property type="term" value="P:axonogenesis"/>
    <property type="evidence" value="ECO:0000318"/>
    <property type="project" value="GO_Central"/>
</dbReference>
<dbReference type="GO" id="GO:0048870">
    <property type="term" value="P:cell motility"/>
    <property type="evidence" value="ECO:0000318"/>
    <property type="project" value="GO_Central"/>
</dbReference>
<dbReference type="GO" id="GO:0072749">
    <property type="term" value="P:cellular response to cytochalasin B"/>
    <property type="evidence" value="ECO:0007669"/>
    <property type="project" value="Ensembl"/>
</dbReference>
<dbReference type="GO" id="GO:0007163">
    <property type="term" value="P:establishment or maintenance of cell polarity"/>
    <property type="evidence" value="ECO:0007669"/>
    <property type="project" value="Ensembl"/>
</dbReference>
<dbReference type="GO" id="GO:0001738">
    <property type="term" value="P:morphogenesis of a polarized epithelium"/>
    <property type="evidence" value="ECO:0007669"/>
    <property type="project" value="Ensembl"/>
</dbReference>
<dbReference type="GO" id="GO:1905168">
    <property type="term" value="P:positive regulation of double-strand break repair via homologous recombination"/>
    <property type="evidence" value="ECO:0007669"/>
    <property type="project" value="Ensembl"/>
</dbReference>
<dbReference type="GO" id="GO:0071896">
    <property type="term" value="P:protein localization to adherens junction"/>
    <property type="evidence" value="ECO:0007669"/>
    <property type="project" value="Ensembl"/>
</dbReference>
<dbReference type="GO" id="GO:0051726">
    <property type="term" value="P:regulation of cell cycle"/>
    <property type="evidence" value="ECO:0007669"/>
    <property type="project" value="Ensembl"/>
</dbReference>
<dbReference type="GO" id="GO:0051621">
    <property type="term" value="P:regulation of norepinephrine uptake"/>
    <property type="evidence" value="ECO:0007669"/>
    <property type="project" value="Ensembl"/>
</dbReference>
<dbReference type="GO" id="GO:1903076">
    <property type="term" value="P:regulation of protein localization to plasma membrane"/>
    <property type="evidence" value="ECO:0007669"/>
    <property type="project" value="Ensembl"/>
</dbReference>
<dbReference type="GO" id="GO:1900242">
    <property type="term" value="P:regulation of synaptic vesicle endocytosis"/>
    <property type="evidence" value="ECO:0007669"/>
    <property type="project" value="Ensembl"/>
</dbReference>
<dbReference type="GO" id="GO:0150111">
    <property type="term" value="P:regulation of transepithelial transport"/>
    <property type="evidence" value="ECO:0007669"/>
    <property type="project" value="Ensembl"/>
</dbReference>
<dbReference type="CDD" id="cd10224">
    <property type="entry name" value="ASKHA_NBD_actin"/>
    <property type="match status" value="1"/>
</dbReference>
<dbReference type="FunFam" id="3.30.420.40:FF:000131">
    <property type="entry name" value="Actin, alpha skeletal muscle"/>
    <property type="match status" value="1"/>
</dbReference>
<dbReference type="FunFam" id="3.30.420.40:FF:000291">
    <property type="entry name" value="Actin, alpha skeletal muscle"/>
    <property type="match status" value="1"/>
</dbReference>
<dbReference type="FunFam" id="3.90.640.10:FF:000047">
    <property type="entry name" value="Actin, alpha skeletal muscle"/>
    <property type="match status" value="1"/>
</dbReference>
<dbReference type="FunFam" id="3.30.420.40:FF:000058">
    <property type="entry name" value="Putative actin-related protein 5"/>
    <property type="match status" value="1"/>
</dbReference>
<dbReference type="Gene3D" id="3.30.420.40">
    <property type="match status" value="2"/>
</dbReference>
<dbReference type="Gene3D" id="3.90.640.10">
    <property type="entry name" value="Actin, Chain A, domain 4"/>
    <property type="match status" value="1"/>
</dbReference>
<dbReference type="InterPro" id="IPR004000">
    <property type="entry name" value="Actin"/>
</dbReference>
<dbReference type="InterPro" id="IPR020902">
    <property type="entry name" value="Actin/actin-like_CS"/>
</dbReference>
<dbReference type="InterPro" id="IPR004001">
    <property type="entry name" value="Actin_CS"/>
</dbReference>
<dbReference type="InterPro" id="IPR043129">
    <property type="entry name" value="ATPase_NBD"/>
</dbReference>
<dbReference type="PANTHER" id="PTHR11937">
    <property type="entry name" value="ACTIN"/>
    <property type="match status" value="1"/>
</dbReference>
<dbReference type="Pfam" id="PF00022">
    <property type="entry name" value="Actin"/>
    <property type="match status" value="1"/>
</dbReference>
<dbReference type="PRINTS" id="PR00190">
    <property type="entry name" value="ACTIN"/>
</dbReference>
<dbReference type="SMART" id="SM00268">
    <property type="entry name" value="ACTIN"/>
    <property type="match status" value="1"/>
</dbReference>
<dbReference type="SUPFAM" id="SSF53067">
    <property type="entry name" value="Actin-like ATPase domain"/>
    <property type="match status" value="2"/>
</dbReference>
<dbReference type="PROSITE" id="PS00406">
    <property type="entry name" value="ACTINS_1"/>
    <property type="match status" value="1"/>
</dbReference>
<dbReference type="PROSITE" id="PS00432">
    <property type="entry name" value="ACTINS_2"/>
    <property type="match status" value="1"/>
</dbReference>
<dbReference type="PROSITE" id="PS01132">
    <property type="entry name" value="ACTINS_ACT_LIKE"/>
    <property type="match status" value="1"/>
</dbReference>
<feature type="chain" id="PRO_0000000757" description="Actin, cytoplasmic 1">
    <location>
        <begin position="1"/>
        <end position="375"/>
    </location>
</feature>
<feature type="initiator methionine" description="Removed; alternate" evidence="2">
    <location>
        <position position="1"/>
    </location>
</feature>
<feature type="chain" id="PRO_0000367066" description="Actin, cytoplasmic 1, N-terminally processed">
    <location>
        <begin position="2"/>
        <end position="375"/>
    </location>
</feature>
<feature type="modified residue" description="N-acetylmethionine" evidence="2">
    <location>
        <position position="1"/>
    </location>
</feature>
<feature type="modified residue" description="N-acetylaspartate; in Actin, cytoplasmic 1, N-terminally processed" evidence="2">
    <location>
        <position position="2"/>
    </location>
</feature>
<feature type="modified residue" description="Methionine (R)-sulfoxide" evidence="3">
    <location>
        <position position="44"/>
    </location>
</feature>
<feature type="modified residue" description="Methionine (R)-sulfoxide" evidence="3">
    <location>
        <position position="47"/>
    </location>
</feature>
<feature type="modified residue" description="Tele-methylhistidine" evidence="3">
    <location>
        <position position="73"/>
    </location>
</feature>
<feature type="modified residue" description="N6-methyllysine" evidence="2">
    <location>
        <position position="84"/>
    </location>
</feature>
<feature type="sequence conflict" description="In Ref. 3; AAI42414." evidence="6" ref="3">
    <original>T</original>
    <variation>A</variation>
    <location>
        <position position="126"/>
    </location>
</feature>
<feature type="sequence conflict" description="In Ref. 1; AAM98378." evidence="6" ref="1">
    <original>AER</original>
    <variation>GRA</variation>
    <location>
        <begin position="204"/>
        <end position="206"/>
    </location>
</feature>
<feature type="sequence conflict" description="In Ref. 1; AAM98378." evidence="6" ref="1">
    <original>S</original>
    <variation>F</variation>
    <location>
        <position position="281"/>
    </location>
</feature>
<feature type="strand" evidence="8">
    <location>
        <begin position="4"/>
        <end position="6"/>
    </location>
</feature>
<feature type="strand" evidence="11">
    <location>
        <begin position="8"/>
        <end position="12"/>
    </location>
</feature>
<feature type="strand" evidence="11">
    <location>
        <begin position="14"/>
        <end position="21"/>
    </location>
</feature>
<feature type="strand" evidence="9">
    <location>
        <begin position="24"/>
        <end position="26"/>
    </location>
</feature>
<feature type="strand" evidence="11">
    <location>
        <begin position="30"/>
        <end position="32"/>
    </location>
</feature>
<feature type="strand" evidence="11">
    <location>
        <begin position="35"/>
        <end position="38"/>
    </location>
</feature>
<feature type="strand" evidence="11">
    <location>
        <begin position="45"/>
        <end position="47"/>
    </location>
</feature>
<feature type="strand" evidence="7">
    <location>
        <begin position="51"/>
        <end position="54"/>
    </location>
</feature>
<feature type="helix" evidence="11">
    <location>
        <begin position="56"/>
        <end position="60"/>
    </location>
</feature>
<feature type="helix" evidence="9">
    <location>
        <begin position="62"/>
        <end position="64"/>
    </location>
</feature>
<feature type="strand" evidence="11">
    <location>
        <begin position="65"/>
        <end position="68"/>
    </location>
</feature>
<feature type="strand" evidence="10">
    <location>
        <begin position="70"/>
        <end position="72"/>
    </location>
</feature>
<feature type="helix" evidence="11">
    <location>
        <begin position="79"/>
        <end position="91"/>
    </location>
</feature>
<feature type="turn" evidence="8">
    <location>
        <begin position="92"/>
        <end position="94"/>
    </location>
</feature>
<feature type="helix" evidence="11">
    <location>
        <begin position="98"/>
        <end position="100"/>
    </location>
</feature>
<feature type="strand" evidence="11">
    <location>
        <begin position="103"/>
        <end position="107"/>
    </location>
</feature>
<feature type="helix" evidence="11">
    <location>
        <begin position="113"/>
        <end position="125"/>
    </location>
</feature>
<feature type="strand" evidence="11">
    <location>
        <begin position="130"/>
        <end position="136"/>
    </location>
</feature>
<feature type="helix" evidence="11">
    <location>
        <begin position="137"/>
        <end position="144"/>
    </location>
</feature>
<feature type="strand" evidence="11">
    <location>
        <begin position="148"/>
        <end position="155"/>
    </location>
</feature>
<feature type="strand" evidence="11">
    <location>
        <begin position="160"/>
        <end position="166"/>
    </location>
</feature>
<feature type="helix" evidence="11">
    <location>
        <begin position="172"/>
        <end position="174"/>
    </location>
</feature>
<feature type="strand" evidence="11">
    <location>
        <begin position="176"/>
        <end position="179"/>
    </location>
</feature>
<feature type="helix" evidence="11">
    <location>
        <begin position="182"/>
        <end position="196"/>
    </location>
</feature>
<feature type="helix" evidence="11">
    <location>
        <begin position="203"/>
        <end position="216"/>
    </location>
</feature>
<feature type="helix" evidence="11">
    <location>
        <begin position="223"/>
        <end position="231"/>
    </location>
</feature>
<feature type="strand" evidence="7">
    <location>
        <begin position="234"/>
        <end position="236"/>
    </location>
</feature>
<feature type="strand" evidence="11">
    <location>
        <begin position="238"/>
        <end position="241"/>
    </location>
</feature>
<feature type="strand" evidence="11">
    <location>
        <begin position="243"/>
        <end position="245"/>
    </location>
</feature>
<feature type="strand" evidence="11">
    <location>
        <begin position="247"/>
        <end position="251"/>
    </location>
</feature>
<feature type="helix" evidence="11">
    <location>
        <begin position="253"/>
        <end position="256"/>
    </location>
</feature>
<feature type="helix" evidence="11">
    <location>
        <begin position="259"/>
        <end position="262"/>
    </location>
</feature>
<feature type="helix" evidence="11">
    <location>
        <begin position="264"/>
        <end position="267"/>
    </location>
</feature>
<feature type="helix" evidence="11">
    <location>
        <begin position="274"/>
        <end position="282"/>
    </location>
</feature>
<feature type="helix" evidence="11">
    <location>
        <begin position="287"/>
        <end position="294"/>
    </location>
</feature>
<feature type="strand" evidence="11">
    <location>
        <begin position="297"/>
        <end position="301"/>
    </location>
</feature>
<feature type="helix" evidence="11">
    <location>
        <begin position="302"/>
        <end position="304"/>
    </location>
</feature>
<feature type="helix" evidence="11">
    <location>
        <begin position="309"/>
        <end position="320"/>
    </location>
</feature>
<feature type="turn" evidence="11">
    <location>
        <begin position="333"/>
        <end position="336"/>
    </location>
</feature>
<feature type="helix" evidence="11">
    <location>
        <begin position="338"/>
        <end position="347"/>
    </location>
</feature>
<feature type="helix" evidence="11">
    <location>
        <begin position="350"/>
        <end position="354"/>
    </location>
</feature>
<feature type="strand" evidence="11">
    <location>
        <begin position="356"/>
        <end position="358"/>
    </location>
</feature>
<feature type="helix" evidence="11">
    <location>
        <begin position="359"/>
        <end position="365"/>
    </location>
</feature>
<feature type="helix" evidence="11">
    <location>
        <begin position="369"/>
        <end position="373"/>
    </location>
</feature>
<organism>
    <name type="scientific">Bos taurus</name>
    <name type="common">Bovine</name>
    <dbReference type="NCBI Taxonomy" id="9913"/>
    <lineage>
        <taxon>Eukaryota</taxon>
        <taxon>Metazoa</taxon>
        <taxon>Chordata</taxon>
        <taxon>Craniata</taxon>
        <taxon>Vertebrata</taxon>
        <taxon>Euteleostomi</taxon>
        <taxon>Mammalia</taxon>
        <taxon>Eutheria</taxon>
        <taxon>Laurasiatheria</taxon>
        <taxon>Artiodactyla</taxon>
        <taxon>Ruminantia</taxon>
        <taxon>Pecora</taxon>
        <taxon>Bovidae</taxon>
        <taxon>Bovinae</taxon>
        <taxon>Bos</taxon>
    </lineage>
</organism>
<protein>
    <recommendedName>
        <fullName>Actin, cytoplasmic 1</fullName>
        <ecNumber evidence="4">3.6.4.-</ecNumber>
    </recommendedName>
    <alternativeName>
        <fullName>Beta-actin</fullName>
    </alternativeName>
    <component>
        <recommendedName>
            <fullName>Actin, cytoplasmic 1, N-terminally processed</fullName>
        </recommendedName>
    </component>
</protein>
<reference key="1">
    <citation type="journal article" date="2003" name="Physiol. Genomics">
        <title>Bovine mammary gene expression profiling using a cDNA microarray enhanced for mammary-specific transcripts.</title>
        <authorList>
            <person name="Suchyta S.P."/>
            <person name="Sipkovsky S."/>
            <person name="Halgren R.G."/>
            <person name="Kruska R."/>
            <person name="Elftman M."/>
            <person name="Weber-Nielsen M."/>
            <person name="Vandehaar M.J."/>
            <person name="Xiao L."/>
            <person name="Tempelman R.J."/>
            <person name="Coussens P.M."/>
        </authorList>
    </citation>
    <scope>NUCLEOTIDE SEQUENCE [MRNA]</scope>
    <source>
        <tissue>Mammary gland</tissue>
    </source>
</reference>
<reference key="2">
    <citation type="journal article" date="2005" name="BMC Genomics">
        <title>Characterization of 954 bovine full-CDS cDNA sequences.</title>
        <authorList>
            <person name="Harhay G.P."/>
            <person name="Sonstegard T.S."/>
            <person name="Keele J.W."/>
            <person name="Heaton M.P."/>
            <person name="Clawson M.L."/>
            <person name="Snelling W.M."/>
            <person name="Wiedmann R.T."/>
            <person name="Van Tassell C.P."/>
            <person name="Smith T.P.L."/>
        </authorList>
    </citation>
    <scope>NUCLEOTIDE SEQUENCE [LARGE SCALE MRNA]</scope>
</reference>
<reference key="3">
    <citation type="submission" date="2007-06" db="EMBL/GenBank/DDBJ databases">
        <authorList>
            <consortium name="NIH - Mammalian Gene Collection (MGC) project"/>
        </authorList>
    </citation>
    <scope>NUCLEOTIDE SEQUENCE [LARGE SCALE MRNA]</scope>
    <source>
        <strain>Crossbred X Angus</strain>
        <strain>Hereford</strain>
        <tissue>Ileum</tissue>
        <tissue>Thymus</tissue>
    </source>
</reference>
<reference key="4">
    <citation type="journal article" date="1978" name="Eur. J. Biochem.">
        <title>Actin amino-acid sequences. Comparison of actins from calf thymus, bovine brain, and SV40-transformed mouse 3T3 cells with rabbit skeletal muscle actin.</title>
        <authorList>
            <person name="Vandekerckhove J."/>
            <person name="Weber K."/>
        </authorList>
    </citation>
    <scope>PROTEIN SEQUENCE OF 2-375</scope>
    <source>
        <tissue>Brain</tissue>
    </source>
</reference>
<reference key="5">
    <citation type="journal article" date="1983" name="J. Biol. Chem.">
        <title>Regulation of protein synthesis in mitogen-activated bovine lymphocytes. Analysis of actin-specific and total mRNA accumulation and utilization.</title>
        <authorList>
            <person name="Degen J.L."/>
            <person name="Neubauer M.G."/>
            <person name="Friezner Degen S.J."/>
            <person name="Seyfried C.E."/>
            <person name="Morris D.R."/>
        </authorList>
    </citation>
    <scope>NUCLEOTIDE SEQUENCE [MRNA] OF 77-228 AND 345-375</scope>
</reference>
<reference key="6">
    <citation type="journal article" date="1993" name="Nature">
        <title>The structure of crystalline profilin-beta-actin.</title>
        <authorList>
            <person name="Schutt C.E."/>
            <person name="Myslik J.C."/>
            <person name="Rozycki M.D."/>
            <person name="Goonesekere N.C.W."/>
            <person name="Lindberg U."/>
        </authorList>
    </citation>
    <scope>X-RAY CRYSTALLOGRAPHY (2.55 ANGSTROMS) OF COMPLEX WITH PROFILIN</scope>
</reference>
<reference key="7">
    <citation type="journal article" date="1996" name="J. Mol. Biol.">
        <title>The structure of an open state of beta-actin at 2.65-A resolution.</title>
        <authorList>
            <person name="Chik J.K."/>
            <person name="Lindberg U."/>
            <person name="Schutt C.E."/>
        </authorList>
    </citation>
    <scope>X-RAY CRYSTALLOGRAPHY (2.65 ANGSTROMS) OF COMPLEX WITH PROFILIN</scope>
</reference>
<evidence type="ECO:0000250" key="1">
    <source>
        <dbReference type="UniProtKB" id="O18840"/>
    </source>
</evidence>
<evidence type="ECO:0000250" key="2">
    <source>
        <dbReference type="UniProtKB" id="P60709"/>
    </source>
</evidence>
<evidence type="ECO:0000250" key="3">
    <source>
        <dbReference type="UniProtKB" id="P60710"/>
    </source>
</evidence>
<evidence type="ECO:0000250" key="4">
    <source>
        <dbReference type="UniProtKB" id="P68137"/>
    </source>
</evidence>
<evidence type="ECO:0000250" key="5">
    <source>
        <dbReference type="UniProtKB" id="Q6QAQ1"/>
    </source>
</evidence>
<evidence type="ECO:0000305" key="6"/>
<evidence type="ECO:0007829" key="7">
    <source>
        <dbReference type="PDB" id="1HLU"/>
    </source>
</evidence>
<evidence type="ECO:0007829" key="8">
    <source>
        <dbReference type="PDB" id="2BTF"/>
    </source>
</evidence>
<evidence type="ECO:0007829" key="9">
    <source>
        <dbReference type="PDB" id="2OAN"/>
    </source>
</evidence>
<evidence type="ECO:0007829" key="10">
    <source>
        <dbReference type="PDB" id="3U4L"/>
    </source>
</evidence>
<evidence type="ECO:0007829" key="11">
    <source>
        <dbReference type="PDB" id="3UB5"/>
    </source>
</evidence>
<proteinExistence type="evidence at protein level"/>
<name>ACTB_BOVIN</name>
<keyword id="KW-0002">3D-structure</keyword>
<keyword id="KW-0007">Acetylation</keyword>
<keyword id="KW-0067">ATP-binding</keyword>
<keyword id="KW-0963">Cytoplasm</keyword>
<keyword id="KW-0206">Cytoskeleton</keyword>
<keyword id="KW-0903">Direct protein sequencing</keyword>
<keyword id="KW-0378">Hydrolase</keyword>
<keyword id="KW-0488">Methylation</keyword>
<keyword id="KW-0547">Nucleotide-binding</keyword>
<keyword id="KW-0539">Nucleus</keyword>
<keyword id="KW-0558">Oxidation</keyword>
<keyword id="KW-1185">Reference proteome</keyword>
<keyword id="KW-0832">Ubl conjugation</keyword>